<organism>
    <name type="scientific">Aromatoleum evansii</name>
    <name type="common">Azoarcus evansii</name>
    <dbReference type="NCBI Taxonomy" id="59406"/>
    <lineage>
        <taxon>Bacteria</taxon>
        <taxon>Pseudomonadati</taxon>
        <taxon>Pseudomonadota</taxon>
        <taxon>Betaproteobacteria</taxon>
        <taxon>Rhodocyclales</taxon>
        <taxon>Rhodocyclaceae</taxon>
        <taxon>Aromatoleum</taxon>
    </lineage>
</organism>
<dbReference type="EC" id="1.2.1.77"/>
<dbReference type="EMBL" id="AF548005">
    <property type="protein sequence ID" value="AAN39373.1"/>
    <property type="molecule type" value="Genomic_DNA"/>
</dbReference>
<dbReference type="SMR" id="Q84HH8"/>
<dbReference type="KEGG" id="ag:AAN39373"/>
<dbReference type="BioCyc" id="MetaCyc:MONOMER-15415"/>
<dbReference type="SABIO-RK" id="Q84HH8"/>
<dbReference type="GO" id="GO:0016620">
    <property type="term" value="F:oxidoreductase activity, acting on the aldehyde or oxo group of donors, NAD or NADP as acceptor"/>
    <property type="evidence" value="ECO:0007669"/>
    <property type="project" value="InterPro"/>
</dbReference>
<dbReference type="GO" id="GO:0009056">
    <property type="term" value="P:catabolic process"/>
    <property type="evidence" value="ECO:0007669"/>
    <property type="project" value="UniProtKB-KW"/>
</dbReference>
<dbReference type="Gene3D" id="3.40.605.10">
    <property type="entry name" value="Aldehyde Dehydrogenase, Chain A, domain 1"/>
    <property type="match status" value="1"/>
</dbReference>
<dbReference type="Gene3D" id="3.40.309.10">
    <property type="entry name" value="Aldehyde Dehydrogenase, Chain A, domain 2"/>
    <property type="match status" value="1"/>
</dbReference>
<dbReference type="InterPro" id="IPR016161">
    <property type="entry name" value="Ald_DH/histidinol_DH"/>
</dbReference>
<dbReference type="InterPro" id="IPR016163">
    <property type="entry name" value="Ald_DH_C"/>
</dbReference>
<dbReference type="InterPro" id="IPR016162">
    <property type="entry name" value="Ald_DH_N"/>
</dbReference>
<dbReference type="InterPro" id="IPR015590">
    <property type="entry name" value="Aldehyde_DH_dom"/>
</dbReference>
<dbReference type="NCBIfam" id="NF008868">
    <property type="entry name" value="PRK11903.1"/>
    <property type="match status" value="1"/>
</dbReference>
<dbReference type="PANTHER" id="PTHR43111">
    <property type="entry name" value="ALDEHYDE DEHYDROGENASE B-RELATED"/>
    <property type="match status" value="1"/>
</dbReference>
<dbReference type="PANTHER" id="PTHR43111:SF1">
    <property type="entry name" value="ALDEHYDE DEHYDROGENASE B-RELATED"/>
    <property type="match status" value="1"/>
</dbReference>
<dbReference type="Pfam" id="PF00171">
    <property type="entry name" value="Aldedh"/>
    <property type="match status" value="1"/>
</dbReference>
<dbReference type="SUPFAM" id="SSF53720">
    <property type="entry name" value="ALDH-like"/>
    <property type="match status" value="1"/>
</dbReference>
<accession>Q84HH8</accession>
<protein>
    <recommendedName>
        <fullName>3,4-dehydroadipyl-CoA semialdehyde dehydrogenase</fullName>
        <ecNumber>1.2.1.77</ecNumber>
    </recommendedName>
</protein>
<name>BOXD_AROEV</name>
<reference key="1">
    <citation type="journal article" date="2002" name="J. Bacteriol.">
        <title>Genes coding for a new pathway of aerobic benzoate metabolism in Azoarcus evansii.</title>
        <authorList>
            <person name="Gescher J."/>
            <person name="Zaar A."/>
            <person name="Mohamed M.E.-S."/>
            <person name="Schaegger H."/>
            <person name="Fuchs G."/>
        </authorList>
    </citation>
    <scope>NUCLEOTIDE SEQUENCE [GENOMIC DNA]</scope>
    <scope>INDUCTION</scope>
    <source>
        <strain>DSM 6898 / NBRC 107771 / KB740</strain>
    </source>
</reference>
<reference key="2">
    <citation type="journal article" date="2006" name="J. Bacteriol.">
        <title>Aerobic benzoyl-coenzyme A (CoA) catabolic pathway in Azoarcus evansii: conversion of ring cleavage product by 3,4-dehydroadipyl-CoA semialdehyde dehydrogenase.</title>
        <authorList>
            <person name="Gescher J."/>
            <person name="Ismail W."/>
            <person name="Oelgeschlaeger E."/>
            <person name="Eisenreich W."/>
            <person name="Woerth J."/>
            <person name="Fuchs G."/>
        </authorList>
    </citation>
    <scope>CATALYTIC ACTIVITY</scope>
    <scope>FUNCTION</scope>
    <scope>BIOPHYSICOCHEMICAL PROPERTIES</scope>
    <scope>SUBUNIT</scope>
    <source>
        <strain>DSM 6898 / NBRC 107771 / KB740</strain>
    </source>
</reference>
<evidence type="ECO:0000250" key="1"/>
<evidence type="ECO:0000256" key="2">
    <source>
        <dbReference type="SAM" id="MobiDB-lite"/>
    </source>
</evidence>
<evidence type="ECO:0000269" key="3">
    <source>
    </source>
</evidence>
<evidence type="ECO:0000269" key="4">
    <source>
    </source>
</evidence>
<evidence type="ECO:0000305" key="5"/>
<comment type="function">
    <text evidence="4">Catalyzes the NADP-dependent oxidation of 3,4-dehydroadipyl-CoA semialdehyde to form cis-3,4-dehydroadipyl-CoA.</text>
</comment>
<comment type="catalytic activity">
    <reaction evidence="4">
        <text>(3Z)-6-oxohex-3-enoyl-CoA + NADP(+) + H2O = cis-3,4-dehydroadipyl-CoA + NADPH + 2 H(+)</text>
        <dbReference type="Rhea" id="RHEA:25391"/>
        <dbReference type="ChEBI" id="CHEBI:15377"/>
        <dbReference type="ChEBI" id="CHEBI:15378"/>
        <dbReference type="ChEBI" id="CHEBI:57783"/>
        <dbReference type="ChEBI" id="CHEBI:58349"/>
        <dbReference type="ChEBI" id="CHEBI:58786"/>
        <dbReference type="ChEBI" id="CHEBI:58787"/>
        <dbReference type="EC" id="1.2.1.77"/>
    </reaction>
</comment>
<comment type="biophysicochemical properties">
    <kinetics>
        <KM evidence="4">25 uM for 3,4-dehydroadipyl-CoA semialdehyde</KM>
        <KM evidence="4">16 uM for NADP</KM>
        <Vmax evidence="4">7.5 umol/min/mg enzyme for the forward reaction</Vmax>
    </kinetics>
    <phDependence>
        <text evidence="4">Optimum pH is 7.2.</text>
    </phDependence>
</comment>
<comment type="subunit">
    <text evidence="4">Homodimer.</text>
</comment>
<comment type="induction">
    <text evidence="3">By benzoate.</text>
</comment>
<comment type="similarity">
    <text evidence="5">Belongs to the aldehyde dehydrogenase family.</text>
</comment>
<feature type="chain" id="PRO_0000350729" description="3,4-dehydroadipyl-CoA semialdehyde dehydrogenase">
    <location>
        <begin position="1"/>
        <end position="515"/>
    </location>
</feature>
<feature type="region of interest" description="Disordered" evidence="2">
    <location>
        <begin position="470"/>
        <end position="515"/>
    </location>
</feature>
<feature type="compositionally biased region" description="Basic residues" evidence="2">
    <location>
        <begin position="479"/>
        <end position="488"/>
    </location>
</feature>
<feature type="compositionally biased region" description="Low complexity" evidence="2">
    <location>
        <begin position="489"/>
        <end position="515"/>
    </location>
</feature>
<feature type="active site" evidence="1">
    <location>
        <position position="255"/>
    </location>
</feature>
<feature type="active site" evidence="1">
    <location>
        <position position="294"/>
    </location>
</feature>
<gene>
    <name type="primary">boxD</name>
</gene>
<sequence>MKLANYVYGQWIEGAGEGAALTDPVTGEALVRVSSDGIDVARALEFARTAGGAALKALTYEERAAKLAAIAELLQAKRAEYFDISLRNSGATEGDASFDVDGAIFTVKSYARAGKALGAGRHLKEGGRVALAKTDVFQGQHFLMPLTGVAVFINAFNFPAWGLWEKAAPALLAGVPVFAKPATPTAWLAQRMVADVVEAGILPPGAISIVCGGARDLLDHVTECDVVSFTGSADTAARMRTHPNVVARSVRINIEADSVNSAILGPDAQPGTPEFDLAVKEIVREMTVKTGQKCTAIRRILAPAGVSRALADAVSGKLAGCKVGNPRSEGVRVGPLVSKAQQAAAFEGLAKLRQECEVVFGGDPDFEPVDADAAVSAFVQPTLLYCDKGLAARHVHDVEVFGPVATMVPYADTRDAVAIARRGHGSLVASVYSGDAAFLGELVPGIADLHGRVMVVDAAVGANHTGHGNVMPTCLHGGPRARRRRRGVGRSARAGDVSPPLRRAGRPRGAGSPVA</sequence>
<proteinExistence type="evidence at protein level"/>
<keyword id="KW-0058">Aromatic hydrocarbons catabolism</keyword>
<keyword id="KW-0521">NADP</keyword>
<keyword id="KW-0560">Oxidoreductase</keyword>